<sequence>MSEKNAYAKSGVDVEAGYEVVERIKKHVARTERAGVMGVLGGFGGMFDLSKTGVKEPVLVSGTDGVGTKLMLAIKYDKHDTIGQDCVAMCVNDIIAAGAEPLYFLDYIATGKNNPVKLEEVVSGVAEGCVQAGVALIGGETAEMPGMYGEDDYDLAGFAVGVAEKSQIIDGSKVKEGDILLGLASSGIHSNGYSLVRRVFADYTGKELLPELEGKQLKDVLLEPTRIYVKAALPLIKEELVNGIGHITGGGFIENVPRMFADDLAAEIDEDKVPVLPIFKALEKYGDIKHEEMFEIFNMGVGLMLAVSPENVNRVKELLDEPVYEIGRIIKKADASVVIK</sequence>
<reference key="1">
    <citation type="journal article" date="2002" name="Proc. Natl. Acad. Sci. U.S.A.">
        <title>Genome sequence of a serotype M3 strain of group A Streptococcus: phage-encoded toxins, the high-virulence phenotype, and clone emergence.</title>
        <authorList>
            <person name="Beres S.B."/>
            <person name="Sylva G.L."/>
            <person name="Barbian K.D."/>
            <person name="Lei B."/>
            <person name="Hoff J.S."/>
            <person name="Mammarella N.D."/>
            <person name="Liu M.-Y."/>
            <person name="Smoot J.C."/>
            <person name="Porcella S.F."/>
            <person name="Parkins L.D."/>
            <person name="Campbell D.S."/>
            <person name="Smith T.M."/>
            <person name="McCormick J.K."/>
            <person name="Leung D.Y.M."/>
            <person name="Schlievert P.M."/>
            <person name="Musser J.M."/>
        </authorList>
    </citation>
    <scope>NUCLEOTIDE SEQUENCE [LARGE SCALE GENOMIC DNA]</scope>
    <source>
        <strain>ATCC BAA-595 / MGAS315</strain>
    </source>
</reference>
<proteinExistence type="inferred from homology"/>
<name>PUR5_STRP3</name>
<comment type="catalytic activity">
    <reaction evidence="1">
        <text>2-formamido-N(1)-(5-O-phospho-beta-D-ribosyl)acetamidine + ATP = 5-amino-1-(5-phospho-beta-D-ribosyl)imidazole + ADP + phosphate + H(+)</text>
        <dbReference type="Rhea" id="RHEA:23032"/>
        <dbReference type="ChEBI" id="CHEBI:15378"/>
        <dbReference type="ChEBI" id="CHEBI:30616"/>
        <dbReference type="ChEBI" id="CHEBI:43474"/>
        <dbReference type="ChEBI" id="CHEBI:137981"/>
        <dbReference type="ChEBI" id="CHEBI:147287"/>
        <dbReference type="ChEBI" id="CHEBI:456216"/>
        <dbReference type="EC" id="6.3.3.1"/>
    </reaction>
</comment>
<comment type="pathway">
    <text evidence="1">Purine metabolism; IMP biosynthesis via de novo pathway; 5-amino-1-(5-phospho-D-ribosyl)imidazole from N(2)-formyl-N(1)-(5-phospho-D-ribosyl)glycinamide: step 2/2.</text>
</comment>
<comment type="subcellular location">
    <subcellularLocation>
        <location evidence="1">Cytoplasm</location>
    </subcellularLocation>
</comment>
<comment type="similarity">
    <text evidence="1">Belongs to the AIR synthase family.</text>
</comment>
<protein>
    <recommendedName>
        <fullName evidence="1">Phosphoribosylformylglycinamidine cyclo-ligase</fullName>
        <ecNumber evidence="1">6.3.3.1</ecNumber>
    </recommendedName>
    <alternativeName>
        <fullName evidence="1">AIR synthase</fullName>
    </alternativeName>
    <alternativeName>
        <fullName evidence="1">AIRS</fullName>
    </alternativeName>
    <alternativeName>
        <fullName evidence="1">Phosphoribosyl-aminoimidazole synthetase</fullName>
    </alternativeName>
</protein>
<keyword id="KW-0067">ATP-binding</keyword>
<keyword id="KW-0963">Cytoplasm</keyword>
<keyword id="KW-0436">Ligase</keyword>
<keyword id="KW-0547">Nucleotide-binding</keyword>
<keyword id="KW-0658">Purine biosynthesis</keyword>
<gene>
    <name evidence="1" type="primary">purM</name>
    <name type="ordered locus">SpyM3_0022</name>
</gene>
<dbReference type="EC" id="6.3.3.1" evidence="1"/>
<dbReference type="EMBL" id="AE014074">
    <property type="protein sequence ID" value="AAM78629.1"/>
    <property type="molecule type" value="Genomic_DNA"/>
</dbReference>
<dbReference type="RefSeq" id="WP_009880322.1">
    <property type="nucleotide sequence ID" value="NC_004070.1"/>
</dbReference>
<dbReference type="SMR" id="P0DD62"/>
<dbReference type="KEGG" id="spg:SpyM3_0022"/>
<dbReference type="HOGENOM" id="CLU_047116_0_0_9"/>
<dbReference type="UniPathway" id="UPA00074">
    <property type="reaction ID" value="UER00129"/>
</dbReference>
<dbReference type="Proteomes" id="UP000000564">
    <property type="component" value="Chromosome"/>
</dbReference>
<dbReference type="GO" id="GO:0005829">
    <property type="term" value="C:cytosol"/>
    <property type="evidence" value="ECO:0007669"/>
    <property type="project" value="TreeGrafter"/>
</dbReference>
<dbReference type="GO" id="GO:0005524">
    <property type="term" value="F:ATP binding"/>
    <property type="evidence" value="ECO:0007669"/>
    <property type="project" value="UniProtKB-KW"/>
</dbReference>
<dbReference type="GO" id="GO:0004637">
    <property type="term" value="F:phosphoribosylamine-glycine ligase activity"/>
    <property type="evidence" value="ECO:0007669"/>
    <property type="project" value="TreeGrafter"/>
</dbReference>
<dbReference type="GO" id="GO:0004641">
    <property type="term" value="F:phosphoribosylformylglycinamidine cyclo-ligase activity"/>
    <property type="evidence" value="ECO:0007669"/>
    <property type="project" value="UniProtKB-UniRule"/>
</dbReference>
<dbReference type="GO" id="GO:0006189">
    <property type="term" value="P:'de novo' IMP biosynthetic process"/>
    <property type="evidence" value="ECO:0007669"/>
    <property type="project" value="UniProtKB-UniRule"/>
</dbReference>
<dbReference type="GO" id="GO:0046084">
    <property type="term" value="P:adenine biosynthetic process"/>
    <property type="evidence" value="ECO:0007669"/>
    <property type="project" value="TreeGrafter"/>
</dbReference>
<dbReference type="CDD" id="cd02196">
    <property type="entry name" value="PurM"/>
    <property type="match status" value="1"/>
</dbReference>
<dbReference type="FunFam" id="3.30.1330.10:FF:000001">
    <property type="entry name" value="Phosphoribosylformylglycinamidine cyclo-ligase"/>
    <property type="match status" value="1"/>
</dbReference>
<dbReference type="FunFam" id="3.90.650.10:FF:000011">
    <property type="entry name" value="Phosphoribosylformylglycinamidine cyclo-ligase"/>
    <property type="match status" value="1"/>
</dbReference>
<dbReference type="Gene3D" id="3.90.650.10">
    <property type="entry name" value="PurM-like C-terminal domain"/>
    <property type="match status" value="1"/>
</dbReference>
<dbReference type="Gene3D" id="3.30.1330.10">
    <property type="entry name" value="PurM-like, N-terminal domain"/>
    <property type="match status" value="1"/>
</dbReference>
<dbReference type="HAMAP" id="MF_00741">
    <property type="entry name" value="AIRS"/>
    <property type="match status" value="1"/>
</dbReference>
<dbReference type="InterPro" id="IPR010918">
    <property type="entry name" value="PurM-like_C_dom"/>
</dbReference>
<dbReference type="InterPro" id="IPR036676">
    <property type="entry name" value="PurM-like_C_sf"/>
</dbReference>
<dbReference type="InterPro" id="IPR016188">
    <property type="entry name" value="PurM-like_N"/>
</dbReference>
<dbReference type="InterPro" id="IPR036921">
    <property type="entry name" value="PurM-like_N_sf"/>
</dbReference>
<dbReference type="InterPro" id="IPR004733">
    <property type="entry name" value="PurM_cligase"/>
</dbReference>
<dbReference type="NCBIfam" id="TIGR00878">
    <property type="entry name" value="purM"/>
    <property type="match status" value="1"/>
</dbReference>
<dbReference type="PANTHER" id="PTHR10520:SF12">
    <property type="entry name" value="TRIFUNCTIONAL PURINE BIOSYNTHETIC PROTEIN ADENOSINE-3"/>
    <property type="match status" value="1"/>
</dbReference>
<dbReference type="PANTHER" id="PTHR10520">
    <property type="entry name" value="TRIFUNCTIONAL PURINE BIOSYNTHETIC PROTEIN ADENOSINE-3-RELATED"/>
    <property type="match status" value="1"/>
</dbReference>
<dbReference type="Pfam" id="PF00586">
    <property type="entry name" value="AIRS"/>
    <property type="match status" value="1"/>
</dbReference>
<dbReference type="Pfam" id="PF02769">
    <property type="entry name" value="AIRS_C"/>
    <property type="match status" value="1"/>
</dbReference>
<dbReference type="SUPFAM" id="SSF56042">
    <property type="entry name" value="PurM C-terminal domain-like"/>
    <property type="match status" value="1"/>
</dbReference>
<dbReference type="SUPFAM" id="SSF55326">
    <property type="entry name" value="PurM N-terminal domain-like"/>
    <property type="match status" value="1"/>
</dbReference>
<accession>P0DD62</accession>
<accession>Q8K8Y7</accession>
<evidence type="ECO:0000255" key="1">
    <source>
        <dbReference type="HAMAP-Rule" id="MF_00741"/>
    </source>
</evidence>
<organism>
    <name type="scientific">Streptococcus pyogenes serotype M3 (strain ATCC BAA-595 / MGAS315)</name>
    <dbReference type="NCBI Taxonomy" id="198466"/>
    <lineage>
        <taxon>Bacteria</taxon>
        <taxon>Bacillati</taxon>
        <taxon>Bacillota</taxon>
        <taxon>Bacilli</taxon>
        <taxon>Lactobacillales</taxon>
        <taxon>Streptococcaceae</taxon>
        <taxon>Streptococcus</taxon>
    </lineage>
</organism>
<feature type="chain" id="PRO_0000148262" description="Phosphoribosylformylglycinamidine cyclo-ligase">
    <location>
        <begin position="1"/>
        <end position="340"/>
    </location>
</feature>